<proteinExistence type="inferred from homology"/>
<sequence>MKRDYYEVLGVSKSADEQEIKKAYRKLARQYHPDVNPGDKDAEEKFKEATEAYDVLSDTEKRARYDQMGHSAFDPNQQGFGGFGGDFGGFGDIFDMFFGGGGGGGQRRQGPTRGNDLRYDLTITFEEAAFGTEKEIQVPRQETCTECHGSGSAPGTHPTTCSQCHGTGQVKATQRTPFGAIQTARTCPACNGSGQFISSPCKECSGKGTTRKVKTIKVTVPPGSEDGLNLRFSGNGEAGLRGGPSGDLYVVLNVKAHKFFEREGNDVYCEIPITFVQAALGSELDVPTLDGKVKMKIPEGTQTATVFRLRGHGIPYRRGNGRGDQHVRVVVATPTKLTDRQKELLREFGEVTSDQQQMGKKSFFEKVKENIRDAIDL</sequence>
<name>DNAJ_DESHD</name>
<accession>B8FUN3</accession>
<reference key="1">
    <citation type="journal article" date="2012" name="BMC Microbiol.">
        <title>Genome sequence of Desulfitobacterium hafniense DCB-2, a Gram-positive anaerobe capable of dehalogenation and metal reduction.</title>
        <authorList>
            <person name="Kim S.H."/>
            <person name="Harzman C."/>
            <person name="Davis J.K."/>
            <person name="Hutcheson R."/>
            <person name="Broderick J.B."/>
            <person name="Marsh T.L."/>
            <person name="Tiedje J.M."/>
        </authorList>
    </citation>
    <scope>NUCLEOTIDE SEQUENCE [LARGE SCALE GENOMIC DNA]</scope>
    <source>
        <strain>DSM 10664 / DCB-2</strain>
    </source>
</reference>
<organism>
    <name type="scientific">Desulfitobacterium hafniense (strain DSM 10664 / DCB-2)</name>
    <dbReference type="NCBI Taxonomy" id="272564"/>
    <lineage>
        <taxon>Bacteria</taxon>
        <taxon>Bacillati</taxon>
        <taxon>Bacillota</taxon>
        <taxon>Clostridia</taxon>
        <taxon>Eubacteriales</taxon>
        <taxon>Desulfitobacteriaceae</taxon>
        <taxon>Desulfitobacterium</taxon>
    </lineage>
</organism>
<feature type="chain" id="PRO_1000164257" description="Chaperone protein DnaJ">
    <location>
        <begin position="1"/>
        <end position="377"/>
    </location>
</feature>
<feature type="domain" description="J" evidence="1">
    <location>
        <begin position="4"/>
        <end position="69"/>
    </location>
</feature>
<feature type="repeat" description="CXXCXGXG motif">
    <location>
        <begin position="144"/>
        <end position="151"/>
    </location>
</feature>
<feature type="repeat" description="CXXCXGXG motif">
    <location>
        <begin position="161"/>
        <end position="168"/>
    </location>
</feature>
<feature type="repeat" description="CXXCXGXG motif">
    <location>
        <begin position="187"/>
        <end position="194"/>
    </location>
</feature>
<feature type="repeat" description="CXXCXGXG motif">
    <location>
        <begin position="201"/>
        <end position="208"/>
    </location>
</feature>
<feature type="zinc finger region" description="CR-type" evidence="1">
    <location>
        <begin position="131"/>
        <end position="213"/>
    </location>
</feature>
<feature type="binding site" evidence="1">
    <location>
        <position position="144"/>
    </location>
    <ligand>
        <name>Zn(2+)</name>
        <dbReference type="ChEBI" id="CHEBI:29105"/>
        <label>1</label>
    </ligand>
</feature>
<feature type="binding site" evidence="1">
    <location>
        <position position="147"/>
    </location>
    <ligand>
        <name>Zn(2+)</name>
        <dbReference type="ChEBI" id="CHEBI:29105"/>
        <label>1</label>
    </ligand>
</feature>
<feature type="binding site" evidence="1">
    <location>
        <position position="161"/>
    </location>
    <ligand>
        <name>Zn(2+)</name>
        <dbReference type="ChEBI" id="CHEBI:29105"/>
        <label>2</label>
    </ligand>
</feature>
<feature type="binding site" evidence="1">
    <location>
        <position position="164"/>
    </location>
    <ligand>
        <name>Zn(2+)</name>
        <dbReference type="ChEBI" id="CHEBI:29105"/>
        <label>2</label>
    </ligand>
</feature>
<feature type="binding site" evidence="1">
    <location>
        <position position="187"/>
    </location>
    <ligand>
        <name>Zn(2+)</name>
        <dbReference type="ChEBI" id="CHEBI:29105"/>
        <label>2</label>
    </ligand>
</feature>
<feature type="binding site" evidence="1">
    <location>
        <position position="190"/>
    </location>
    <ligand>
        <name>Zn(2+)</name>
        <dbReference type="ChEBI" id="CHEBI:29105"/>
        <label>2</label>
    </ligand>
</feature>
<feature type="binding site" evidence="1">
    <location>
        <position position="201"/>
    </location>
    <ligand>
        <name>Zn(2+)</name>
        <dbReference type="ChEBI" id="CHEBI:29105"/>
        <label>1</label>
    </ligand>
</feature>
<feature type="binding site" evidence="1">
    <location>
        <position position="204"/>
    </location>
    <ligand>
        <name>Zn(2+)</name>
        <dbReference type="ChEBI" id="CHEBI:29105"/>
        <label>1</label>
    </ligand>
</feature>
<gene>
    <name evidence="1" type="primary">dnaJ</name>
    <name type="ordered locus">Dhaf_4298</name>
</gene>
<protein>
    <recommendedName>
        <fullName evidence="1">Chaperone protein DnaJ</fullName>
    </recommendedName>
</protein>
<evidence type="ECO:0000255" key="1">
    <source>
        <dbReference type="HAMAP-Rule" id="MF_01152"/>
    </source>
</evidence>
<keyword id="KW-0143">Chaperone</keyword>
<keyword id="KW-0963">Cytoplasm</keyword>
<keyword id="KW-0235">DNA replication</keyword>
<keyword id="KW-0479">Metal-binding</keyword>
<keyword id="KW-0677">Repeat</keyword>
<keyword id="KW-0346">Stress response</keyword>
<keyword id="KW-0862">Zinc</keyword>
<keyword id="KW-0863">Zinc-finger</keyword>
<comment type="function">
    <text evidence="1">Participates actively in the response to hyperosmotic and heat shock by preventing the aggregation of stress-denatured proteins and by disaggregating proteins, also in an autonomous, DnaK-independent fashion. Unfolded proteins bind initially to DnaJ; upon interaction with the DnaJ-bound protein, DnaK hydrolyzes its bound ATP, resulting in the formation of a stable complex. GrpE releases ADP from DnaK; ATP binding to DnaK triggers the release of the substrate protein, thus completing the reaction cycle. Several rounds of ATP-dependent interactions between DnaJ, DnaK and GrpE are required for fully efficient folding. Also involved, together with DnaK and GrpE, in the DNA replication of plasmids through activation of initiation proteins.</text>
</comment>
<comment type="cofactor">
    <cofactor evidence="1">
        <name>Zn(2+)</name>
        <dbReference type="ChEBI" id="CHEBI:29105"/>
    </cofactor>
    <text evidence="1">Binds 2 Zn(2+) ions per monomer.</text>
</comment>
<comment type="subunit">
    <text evidence="1">Homodimer.</text>
</comment>
<comment type="subcellular location">
    <subcellularLocation>
        <location evidence="1">Cytoplasm</location>
    </subcellularLocation>
</comment>
<comment type="domain">
    <text evidence="1">The J domain is necessary and sufficient to stimulate DnaK ATPase activity. Zinc center 1 plays an important role in the autonomous, DnaK-independent chaperone activity of DnaJ. Zinc center 2 is essential for interaction with DnaK and for DnaJ activity.</text>
</comment>
<comment type="similarity">
    <text evidence="1">Belongs to the DnaJ family.</text>
</comment>
<dbReference type="EMBL" id="CP001336">
    <property type="protein sequence ID" value="ACL22303.1"/>
    <property type="molecule type" value="Genomic_DNA"/>
</dbReference>
<dbReference type="RefSeq" id="WP_005816474.1">
    <property type="nucleotide sequence ID" value="NC_011830.1"/>
</dbReference>
<dbReference type="SMR" id="B8FUN3"/>
<dbReference type="KEGG" id="dhd:Dhaf_4298"/>
<dbReference type="HOGENOM" id="CLU_017633_0_7_9"/>
<dbReference type="Proteomes" id="UP000007726">
    <property type="component" value="Chromosome"/>
</dbReference>
<dbReference type="GO" id="GO:0005737">
    <property type="term" value="C:cytoplasm"/>
    <property type="evidence" value="ECO:0007669"/>
    <property type="project" value="UniProtKB-SubCell"/>
</dbReference>
<dbReference type="GO" id="GO:0005524">
    <property type="term" value="F:ATP binding"/>
    <property type="evidence" value="ECO:0007669"/>
    <property type="project" value="InterPro"/>
</dbReference>
<dbReference type="GO" id="GO:0031072">
    <property type="term" value="F:heat shock protein binding"/>
    <property type="evidence" value="ECO:0007669"/>
    <property type="project" value="InterPro"/>
</dbReference>
<dbReference type="GO" id="GO:0051082">
    <property type="term" value="F:unfolded protein binding"/>
    <property type="evidence" value="ECO:0007669"/>
    <property type="project" value="UniProtKB-UniRule"/>
</dbReference>
<dbReference type="GO" id="GO:0008270">
    <property type="term" value="F:zinc ion binding"/>
    <property type="evidence" value="ECO:0007669"/>
    <property type="project" value="UniProtKB-UniRule"/>
</dbReference>
<dbReference type="GO" id="GO:0051085">
    <property type="term" value="P:chaperone cofactor-dependent protein refolding"/>
    <property type="evidence" value="ECO:0007669"/>
    <property type="project" value="TreeGrafter"/>
</dbReference>
<dbReference type="GO" id="GO:0006260">
    <property type="term" value="P:DNA replication"/>
    <property type="evidence" value="ECO:0007669"/>
    <property type="project" value="UniProtKB-KW"/>
</dbReference>
<dbReference type="GO" id="GO:0042026">
    <property type="term" value="P:protein refolding"/>
    <property type="evidence" value="ECO:0007669"/>
    <property type="project" value="TreeGrafter"/>
</dbReference>
<dbReference type="GO" id="GO:0009408">
    <property type="term" value="P:response to heat"/>
    <property type="evidence" value="ECO:0007669"/>
    <property type="project" value="InterPro"/>
</dbReference>
<dbReference type="CDD" id="cd06257">
    <property type="entry name" value="DnaJ"/>
    <property type="match status" value="1"/>
</dbReference>
<dbReference type="CDD" id="cd10747">
    <property type="entry name" value="DnaJ_C"/>
    <property type="match status" value="1"/>
</dbReference>
<dbReference type="CDD" id="cd10719">
    <property type="entry name" value="DnaJ_zf"/>
    <property type="match status" value="1"/>
</dbReference>
<dbReference type="FunFam" id="1.10.287.110:FF:000031">
    <property type="entry name" value="Molecular chaperone DnaJ"/>
    <property type="match status" value="1"/>
</dbReference>
<dbReference type="FunFam" id="2.10.230.10:FF:000002">
    <property type="entry name" value="Molecular chaperone DnaJ"/>
    <property type="match status" value="1"/>
</dbReference>
<dbReference type="FunFam" id="2.60.260.20:FF:000004">
    <property type="entry name" value="Molecular chaperone DnaJ"/>
    <property type="match status" value="1"/>
</dbReference>
<dbReference type="Gene3D" id="1.10.287.110">
    <property type="entry name" value="DnaJ domain"/>
    <property type="match status" value="1"/>
</dbReference>
<dbReference type="Gene3D" id="2.10.230.10">
    <property type="entry name" value="Heat shock protein DnaJ, cysteine-rich domain"/>
    <property type="match status" value="1"/>
</dbReference>
<dbReference type="Gene3D" id="2.60.260.20">
    <property type="entry name" value="Urease metallochaperone UreE, N-terminal domain"/>
    <property type="match status" value="2"/>
</dbReference>
<dbReference type="HAMAP" id="MF_01152">
    <property type="entry name" value="DnaJ"/>
    <property type="match status" value="1"/>
</dbReference>
<dbReference type="InterPro" id="IPR012724">
    <property type="entry name" value="DnaJ"/>
</dbReference>
<dbReference type="InterPro" id="IPR002939">
    <property type="entry name" value="DnaJ_C"/>
</dbReference>
<dbReference type="InterPro" id="IPR001623">
    <property type="entry name" value="DnaJ_domain"/>
</dbReference>
<dbReference type="InterPro" id="IPR018253">
    <property type="entry name" value="DnaJ_domain_CS"/>
</dbReference>
<dbReference type="InterPro" id="IPR008971">
    <property type="entry name" value="HSP40/DnaJ_pept-bd"/>
</dbReference>
<dbReference type="InterPro" id="IPR001305">
    <property type="entry name" value="HSP_DnaJ_Cys-rich_dom"/>
</dbReference>
<dbReference type="InterPro" id="IPR036410">
    <property type="entry name" value="HSP_DnaJ_Cys-rich_dom_sf"/>
</dbReference>
<dbReference type="InterPro" id="IPR036869">
    <property type="entry name" value="J_dom_sf"/>
</dbReference>
<dbReference type="NCBIfam" id="TIGR02349">
    <property type="entry name" value="DnaJ_bact"/>
    <property type="match status" value="1"/>
</dbReference>
<dbReference type="NCBIfam" id="NF008035">
    <property type="entry name" value="PRK10767.1"/>
    <property type="match status" value="1"/>
</dbReference>
<dbReference type="PANTHER" id="PTHR43096:SF48">
    <property type="entry name" value="CHAPERONE PROTEIN DNAJ"/>
    <property type="match status" value="1"/>
</dbReference>
<dbReference type="PANTHER" id="PTHR43096">
    <property type="entry name" value="DNAJ HOMOLOG 1, MITOCHONDRIAL-RELATED"/>
    <property type="match status" value="1"/>
</dbReference>
<dbReference type="Pfam" id="PF00226">
    <property type="entry name" value="DnaJ"/>
    <property type="match status" value="1"/>
</dbReference>
<dbReference type="Pfam" id="PF01556">
    <property type="entry name" value="DnaJ_C"/>
    <property type="match status" value="1"/>
</dbReference>
<dbReference type="Pfam" id="PF00684">
    <property type="entry name" value="DnaJ_CXXCXGXG"/>
    <property type="match status" value="1"/>
</dbReference>
<dbReference type="PRINTS" id="PR00625">
    <property type="entry name" value="JDOMAIN"/>
</dbReference>
<dbReference type="SMART" id="SM00271">
    <property type="entry name" value="DnaJ"/>
    <property type="match status" value="1"/>
</dbReference>
<dbReference type="SUPFAM" id="SSF46565">
    <property type="entry name" value="Chaperone J-domain"/>
    <property type="match status" value="1"/>
</dbReference>
<dbReference type="SUPFAM" id="SSF57938">
    <property type="entry name" value="DnaJ/Hsp40 cysteine-rich domain"/>
    <property type="match status" value="1"/>
</dbReference>
<dbReference type="SUPFAM" id="SSF49493">
    <property type="entry name" value="HSP40/DnaJ peptide-binding domain"/>
    <property type="match status" value="2"/>
</dbReference>
<dbReference type="PROSITE" id="PS00636">
    <property type="entry name" value="DNAJ_1"/>
    <property type="match status" value="1"/>
</dbReference>
<dbReference type="PROSITE" id="PS50076">
    <property type="entry name" value="DNAJ_2"/>
    <property type="match status" value="1"/>
</dbReference>
<dbReference type="PROSITE" id="PS51188">
    <property type="entry name" value="ZF_CR"/>
    <property type="match status" value="1"/>
</dbReference>